<organism>
    <name type="scientific">Halobacterium salinarum (strain ATCC 29341 / DSM 671 / R1)</name>
    <dbReference type="NCBI Taxonomy" id="478009"/>
    <lineage>
        <taxon>Archaea</taxon>
        <taxon>Methanobacteriati</taxon>
        <taxon>Methanobacteriota</taxon>
        <taxon>Stenosarchaea group</taxon>
        <taxon>Halobacteria</taxon>
        <taxon>Halobacteriales</taxon>
        <taxon>Halobacteriaceae</taxon>
        <taxon>Halobacterium</taxon>
        <taxon>Halobacterium salinarum NRC-34001</taxon>
    </lineage>
</organism>
<sequence>MSEQDEVPSEDRRKYEFRKVIEELKDYEGSGTQLVTIYIPPDKQISDVVAHVTQEHSEASNIKSKQTRTNVQDALTSIKDRLRYYDTFPPDNGMVVFSGAVDSGGGRTDMVTEVLESPPQPIESFRYHCDSAFLTEPLAEMLGDKGLYGLIVLDRRESNVGWLKGKRVQPVKSAESLVPGKQRKGGQSAQRFARLRLEAIDNFYQEVAGMADDLFVPKRHEIDGILVGGPSPTKDEFLDGDYLHHELQDKVLGKFDVSYTDESGLSDLVDAGQAALAEADLMDDKSDMEEFFEELNGGKLATYGFEQTRRNLIMGSVDRLLVSEDLREDVVIYECPNDHEEYETIDRRNTSPEHTCSDCGEEATEVDREDAIDHLMSIADQRGTETHFISTDFEKGEQLLTAFGGYAGILRYSTGV</sequence>
<accession>B0R748</accession>
<comment type="function">
    <text evidence="1">Directs the termination of nascent peptide synthesis (translation) in response to the termination codons UAA, UAG and UGA.</text>
</comment>
<comment type="subunit">
    <text evidence="1">Heterodimer of two subunits, one of which binds GTP.</text>
</comment>
<comment type="subcellular location">
    <subcellularLocation>
        <location evidence="1">Cytoplasm</location>
    </subcellularLocation>
</comment>
<comment type="similarity">
    <text evidence="1">Belongs to the eukaryotic release factor 1 family.</text>
</comment>
<feature type="chain" id="PRO_1000193543" description="Peptide chain release factor subunit 1">
    <location>
        <begin position="1"/>
        <end position="416"/>
    </location>
</feature>
<feature type="helix" evidence="2">
    <location>
        <begin position="10"/>
        <end position="25"/>
    </location>
</feature>
<feature type="strand" evidence="2">
    <location>
        <begin position="30"/>
        <end position="32"/>
    </location>
</feature>
<feature type="strand" evidence="2">
    <location>
        <begin position="34"/>
        <end position="39"/>
    </location>
</feature>
<feature type="helix" evidence="2">
    <location>
        <begin position="45"/>
        <end position="58"/>
    </location>
</feature>
<feature type="helix" evidence="2">
    <location>
        <begin position="59"/>
        <end position="61"/>
    </location>
</feature>
<feature type="helix" evidence="2">
    <location>
        <begin position="65"/>
        <end position="81"/>
    </location>
</feature>
<feature type="helix" evidence="2">
    <location>
        <begin position="82"/>
        <end position="84"/>
    </location>
</feature>
<feature type="strand" evidence="2">
    <location>
        <begin position="94"/>
        <end position="102"/>
    </location>
</feature>
<feature type="strand" evidence="2">
    <location>
        <begin position="108"/>
        <end position="116"/>
    </location>
</feature>
<feature type="strand" evidence="2">
    <location>
        <begin position="126"/>
        <end position="132"/>
    </location>
</feature>
<feature type="turn" evidence="2">
    <location>
        <begin position="136"/>
        <end position="142"/>
    </location>
</feature>
<feature type="strand" evidence="2">
    <location>
        <begin position="147"/>
        <end position="153"/>
    </location>
</feature>
<feature type="strand" evidence="2">
    <location>
        <begin position="155"/>
        <end position="164"/>
    </location>
</feature>
<feature type="strand" evidence="2">
    <location>
        <begin position="167"/>
        <end position="175"/>
    </location>
</feature>
<feature type="helix" evidence="2">
    <location>
        <begin position="193"/>
        <end position="215"/>
    </location>
</feature>
<feature type="turn" evidence="2">
    <location>
        <begin position="216"/>
        <end position="221"/>
    </location>
</feature>
<feature type="strand" evidence="2">
    <location>
        <begin position="222"/>
        <end position="230"/>
    </location>
</feature>
<feature type="helix" evidence="2">
    <location>
        <begin position="231"/>
        <end position="239"/>
    </location>
</feature>
<feature type="turn" evidence="2">
    <location>
        <begin position="240"/>
        <end position="242"/>
    </location>
</feature>
<feature type="helix" evidence="2">
    <location>
        <begin position="245"/>
        <end position="248"/>
    </location>
</feature>
<feature type="strand" evidence="2">
    <location>
        <begin position="251"/>
        <end position="256"/>
    </location>
</feature>
<feature type="helix" evidence="2">
    <location>
        <begin position="264"/>
        <end position="271"/>
    </location>
</feature>
<feature type="helix" evidence="2">
    <location>
        <begin position="273"/>
        <end position="280"/>
    </location>
</feature>
<feature type="helix" evidence="2">
    <location>
        <begin position="282"/>
        <end position="296"/>
    </location>
</feature>
<feature type="strand" evidence="2">
    <location>
        <begin position="299"/>
        <end position="304"/>
    </location>
</feature>
<feature type="helix" evidence="2">
    <location>
        <begin position="305"/>
        <end position="313"/>
    </location>
</feature>
<feature type="strand" evidence="2">
    <location>
        <begin position="317"/>
        <end position="323"/>
    </location>
</feature>
<feature type="strand" evidence="2">
    <location>
        <begin position="328"/>
        <end position="334"/>
    </location>
</feature>
<feature type="strand" evidence="2">
    <location>
        <begin position="342"/>
        <end position="346"/>
    </location>
</feature>
<feature type="turn" evidence="2">
    <location>
        <begin position="357"/>
        <end position="359"/>
    </location>
</feature>
<feature type="strand" evidence="2">
    <location>
        <begin position="364"/>
        <end position="370"/>
    </location>
</feature>
<feature type="helix" evidence="2">
    <location>
        <begin position="371"/>
        <end position="381"/>
    </location>
</feature>
<feature type="strand" evidence="2">
    <location>
        <begin position="385"/>
        <end position="389"/>
    </location>
</feature>
<feature type="strand" evidence="2">
    <location>
        <begin position="391"/>
        <end position="393"/>
    </location>
</feature>
<feature type="helix" evidence="2">
    <location>
        <begin position="394"/>
        <end position="401"/>
    </location>
</feature>
<feature type="turn" evidence="2">
    <location>
        <begin position="402"/>
        <end position="405"/>
    </location>
</feature>
<feature type="strand" evidence="2">
    <location>
        <begin position="406"/>
        <end position="412"/>
    </location>
</feature>
<dbReference type="EMBL" id="AM774415">
    <property type="protein sequence ID" value="CAP14567.1"/>
    <property type="molecule type" value="Genomic_DNA"/>
</dbReference>
<dbReference type="RefSeq" id="WP_012289438.1">
    <property type="nucleotide sequence ID" value="NC_010364.1"/>
</dbReference>
<dbReference type="PDB" id="4AF1">
    <property type="method" value="X-ray"/>
    <property type="resolution" value="2.00 A"/>
    <property type="chains" value="A=1-416"/>
</dbReference>
<dbReference type="PDBsum" id="4AF1"/>
<dbReference type="SMR" id="B0R748"/>
<dbReference type="EnsemblBacteria" id="CAP14567">
    <property type="protein sequence ID" value="CAP14567"/>
    <property type="gene ID" value="OE_3973F"/>
</dbReference>
<dbReference type="GeneID" id="89350291"/>
<dbReference type="KEGG" id="hsl:OE_3973F"/>
<dbReference type="HOGENOM" id="CLU_035759_3_0_2"/>
<dbReference type="PhylomeDB" id="B0R748"/>
<dbReference type="EvolutionaryTrace" id="B0R748"/>
<dbReference type="Proteomes" id="UP000001321">
    <property type="component" value="Chromosome"/>
</dbReference>
<dbReference type="GO" id="GO:0005737">
    <property type="term" value="C:cytoplasm"/>
    <property type="evidence" value="ECO:0007669"/>
    <property type="project" value="UniProtKB-SubCell"/>
</dbReference>
<dbReference type="GO" id="GO:0016149">
    <property type="term" value="F:translation release factor activity, codon specific"/>
    <property type="evidence" value="ECO:0007669"/>
    <property type="project" value="UniProtKB-UniRule"/>
</dbReference>
<dbReference type="FunFam" id="3.30.420.60:FF:000003">
    <property type="entry name" value="Peptide chain release factor subunit 1"/>
    <property type="match status" value="1"/>
</dbReference>
<dbReference type="FunFam" id="3.30.960.10:FF:000003">
    <property type="entry name" value="Peptide chain release factor subunit 1"/>
    <property type="match status" value="1"/>
</dbReference>
<dbReference type="Gene3D" id="1.20.5.170">
    <property type="match status" value="1"/>
</dbReference>
<dbReference type="Gene3D" id="3.30.1330.30">
    <property type="match status" value="1"/>
</dbReference>
<dbReference type="Gene3D" id="3.30.960.10">
    <property type="entry name" value="eRF1 domain 1"/>
    <property type="match status" value="1"/>
</dbReference>
<dbReference type="Gene3D" id="3.30.420.60">
    <property type="entry name" value="eRF1 domain 2"/>
    <property type="match status" value="1"/>
</dbReference>
<dbReference type="HAMAP" id="MF_00424">
    <property type="entry name" value="Rel_fact_arch_1"/>
    <property type="match status" value="1"/>
</dbReference>
<dbReference type="InterPro" id="IPR042226">
    <property type="entry name" value="eFR1_2_sf"/>
</dbReference>
<dbReference type="InterPro" id="IPR005140">
    <property type="entry name" value="eRF1_1_Pelota"/>
</dbReference>
<dbReference type="InterPro" id="IPR024049">
    <property type="entry name" value="eRF1_1_sf"/>
</dbReference>
<dbReference type="InterPro" id="IPR005141">
    <property type="entry name" value="eRF1_2"/>
</dbReference>
<dbReference type="InterPro" id="IPR005142">
    <property type="entry name" value="eRF1_3"/>
</dbReference>
<dbReference type="InterPro" id="IPR020918">
    <property type="entry name" value="Peptide_chain-rel_aRF1"/>
</dbReference>
<dbReference type="InterPro" id="IPR004403">
    <property type="entry name" value="Peptide_chain-rel_eRF1/aRF1"/>
</dbReference>
<dbReference type="InterPro" id="IPR029064">
    <property type="entry name" value="Ribosomal_eL30-like_sf"/>
</dbReference>
<dbReference type="NCBIfam" id="TIGR03676">
    <property type="entry name" value="aRF1_eRF1"/>
    <property type="match status" value="1"/>
</dbReference>
<dbReference type="PANTHER" id="PTHR10113">
    <property type="entry name" value="PEPTIDE CHAIN RELEASE FACTOR SUBUNIT 1"/>
    <property type="match status" value="1"/>
</dbReference>
<dbReference type="Pfam" id="PF03463">
    <property type="entry name" value="eRF1_1"/>
    <property type="match status" value="1"/>
</dbReference>
<dbReference type="Pfam" id="PF03464">
    <property type="entry name" value="eRF1_2"/>
    <property type="match status" value="1"/>
</dbReference>
<dbReference type="Pfam" id="PF03465">
    <property type="entry name" value="eRF1_3"/>
    <property type="match status" value="1"/>
</dbReference>
<dbReference type="SMART" id="SM01194">
    <property type="entry name" value="eRF1_1"/>
    <property type="match status" value="1"/>
</dbReference>
<dbReference type="SUPFAM" id="SSF55315">
    <property type="entry name" value="L30e-like"/>
    <property type="match status" value="1"/>
</dbReference>
<dbReference type="SUPFAM" id="SSF55481">
    <property type="entry name" value="N-terminal domain of eukaryotic peptide chain release factor subunit 1, ERF1"/>
    <property type="match status" value="1"/>
</dbReference>
<dbReference type="SUPFAM" id="SSF53137">
    <property type="entry name" value="Translational machinery components"/>
    <property type="match status" value="1"/>
</dbReference>
<evidence type="ECO:0000255" key="1">
    <source>
        <dbReference type="HAMAP-Rule" id="MF_00424"/>
    </source>
</evidence>
<evidence type="ECO:0007829" key="2">
    <source>
        <dbReference type="PDB" id="4AF1"/>
    </source>
</evidence>
<keyword id="KW-0002">3D-structure</keyword>
<keyword id="KW-0963">Cytoplasm</keyword>
<keyword id="KW-0648">Protein biosynthesis</keyword>
<protein>
    <recommendedName>
        <fullName evidence="1">Peptide chain release factor subunit 1</fullName>
    </recommendedName>
    <alternativeName>
        <fullName evidence="1">Translation termination factor aRF1</fullName>
    </alternativeName>
</protein>
<gene>
    <name evidence="1" type="primary">prf1</name>
    <name type="ordered locus">OE_3973F</name>
</gene>
<proteinExistence type="evidence at protein level"/>
<name>RF1_HALS3</name>
<reference key="1">
    <citation type="journal article" date="2008" name="Genomics">
        <title>Evolution in the laboratory: the genome of Halobacterium salinarum strain R1 compared to that of strain NRC-1.</title>
        <authorList>
            <person name="Pfeiffer F."/>
            <person name="Schuster S.C."/>
            <person name="Broicher A."/>
            <person name="Falb M."/>
            <person name="Palm P."/>
            <person name="Rodewald K."/>
            <person name="Ruepp A."/>
            <person name="Soppa J."/>
            <person name="Tittor J."/>
            <person name="Oesterhelt D."/>
        </authorList>
    </citation>
    <scope>NUCLEOTIDE SEQUENCE [LARGE SCALE GENOMIC DNA]</scope>
    <source>
        <strain>ATCC 29341 / DSM 671 / R1</strain>
    </source>
</reference>